<organism>
    <name type="scientific">Xenopus laevis</name>
    <name type="common">African clawed frog</name>
    <dbReference type="NCBI Taxonomy" id="8355"/>
    <lineage>
        <taxon>Eukaryota</taxon>
        <taxon>Metazoa</taxon>
        <taxon>Chordata</taxon>
        <taxon>Craniata</taxon>
        <taxon>Vertebrata</taxon>
        <taxon>Euteleostomi</taxon>
        <taxon>Amphibia</taxon>
        <taxon>Batrachia</taxon>
        <taxon>Anura</taxon>
        <taxon>Pipoidea</taxon>
        <taxon>Pipidae</taxon>
        <taxon>Xenopodinae</taxon>
        <taxon>Xenopus</taxon>
        <taxon>Xenopus</taxon>
    </lineage>
</organism>
<proteinExistence type="evidence at transcript level"/>
<gene>
    <name type="primary">thbs4</name>
    <name type="synonym">tsp4</name>
</gene>
<name>TSP4_XENLA</name>
<keyword id="KW-0106">Calcium</keyword>
<keyword id="KW-0130">Cell adhesion</keyword>
<keyword id="KW-1015">Disulfide bond</keyword>
<keyword id="KW-0245">EGF-like domain</keyword>
<keyword id="KW-0256">Endoplasmic reticulum</keyword>
<keyword id="KW-0272">Extracellular matrix</keyword>
<keyword id="KW-0325">Glycoprotein</keyword>
<keyword id="KW-0339">Growth factor</keyword>
<keyword id="KW-0497">Mitogen</keyword>
<keyword id="KW-1185">Reference proteome</keyword>
<keyword id="KW-0677">Repeat</keyword>
<keyword id="KW-0703">Sarcoplasmic reticulum</keyword>
<keyword id="KW-0964">Secreted</keyword>
<keyword id="KW-0732">Signal</keyword>
<keyword id="KW-0834">Unfolded protein response</keyword>
<reference key="1">
    <citation type="journal article" date="1993" name="J. Cell Biol.">
        <title>Identification and characterization of thrombospondin-4, a new member of the thrombospondin gene family.</title>
        <authorList>
            <person name="Lawler J."/>
            <person name="Duquette M."/>
            <person name="Whittaker C.A."/>
            <person name="Adams J.C."/>
            <person name="McHenry K."/>
            <person name="Desimone D.W."/>
        </authorList>
    </citation>
    <scope>NUCLEOTIDE SEQUENCE [MRNA]</scope>
</reference>
<protein>
    <recommendedName>
        <fullName>Thrombospondin-4</fullName>
    </recommendedName>
</protein>
<comment type="function">
    <text evidence="1">Adhesive glycoprotein that mediates cell-to-cell and cell-to-matrix interactions and may be involved in various processes including cellular proliferation, migration, adhesion and attachment. May play a role in ER stress response (By similarity). May participate in the genesis and function of cardiac and skeletal muscle.</text>
</comment>
<comment type="subunit">
    <text>Homotrimer; disulfide-linked.</text>
</comment>
<comment type="subcellular location">
    <subcellularLocation>
        <location evidence="1">Endoplasmic reticulum</location>
    </subcellularLocation>
    <subcellularLocation>
        <location evidence="1">Sarcoplasmic reticulum</location>
    </subcellularLocation>
    <subcellularLocation>
        <location evidence="1">Secreted</location>
    </subcellularLocation>
    <subcellularLocation>
        <location evidence="1">Secreted</location>
        <location evidence="1">Extracellular space</location>
    </subcellularLocation>
    <subcellularLocation>
        <location evidence="1">Secreted</location>
        <location evidence="1">Extracellular space</location>
        <location evidence="1">Extracellular matrix</location>
    </subcellularLocation>
</comment>
<comment type="developmental stage">
    <text>Initial expression during neurulation. Increase during tailbud stages but decrease by the feeding tadpole stage.</text>
</comment>
<comment type="similarity">
    <text evidence="6">Belongs to the thrombospondin family.</text>
</comment>
<accession>Q06441</accession>
<sequence>MPRRKGLCLFLQMLLLHLYGVCQAQPNYQVFDLLSVSVQRQVTSFLQSALSNPSMNEVYVLSTFKLQPKSTVTLFGLYSTSDNSRFFEFTVMGRLNKASLRYLRSDGKLHSVFFNKLDIADGKQHALLLHLSGLHRGATFAKLYIDCNPTGVVEDLPRPLSGIRLNTGSVHLRTLQKKGQDSMDELKLVMGGTLSEVGAIQECFMQKSEAGQQTGDVSRQLIGQITQMNQMLGELRDVMRQQVKETMFLRNTIAECQACGLGPDFPLPTKVPQRLATTTPPKPRCDATSCFRGVRCIDTEGGFQCGPCPEGYTGNGVICTDVDECRLNPCFLGVRCINTSPGFKCESCPPGYTGSTIQGIGINFAKQNKQVCTDTNECENGRNGGCTSNSLCINTMGSFRCGGCKPGYVGDQIKGCKPEKSCRHGQNPCHASAQCSEEKDGDVTCTCSVGWAGNGYLCGKDTDIDGYPDEALPCPDKNCKKDNCVYVPNSGQEDTDKDNIGDACDEDADGDGILNEQDNCVLAANIDQKNSDQDIFGDACDNCRLTLNNDQRDTDNDGKGDACDDDMDGDGIKNILDNCQRVPNVDQKDKDGDGVGDICDSCPDIINPNQSDIDNDLVGDSCDTNQDSDGDGHQDSTDNCPTVINSNQLDTDKDGIGDECDDDDDNDGIPDTVPPGPDNCKLVPNPGQEDDNNDGVGDVCEADFDQDTVIDRIDVCPENAEITLTDFRAYQTVVLDPEGDAQIDPNWIVLNQGMEIVQTMNSDPGLAVGYTAFNGVDFEGTFHVNTMTDDDYAGFIFGYQDSSSFYVVMWKQTEQTYWQATPFRAVAEPGIQLKAVKSKSGPGEHLRNALWHTGDTNDQVRLLWKDPRNVGWKDKVSYRWFLQHRPQVGYIRARFYEGTELVADSGVTVDTTMRGGRLGVFCFSQENIIWSNLKYRCNDTIPEDFQAFQAQQFSS</sequence>
<feature type="signal peptide" evidence="2">
    <location>
        <begin position="1"/>
        <end position="24"/>
    </location>
</feature>
<feature type="chain" id="PRO_0000035856" description="Thrombospondin-4">
    <location>
        <begin position="25"/>
        <end position="955"/>
    </location>
</feature>
<feature type="domain" description="Laminin G-like">
    <location>
        <begin position="25"/>
        <end position="192"/>
    </location>
</feature>
<feature type="domain" description="EGF-like 1" evidence="3">
    <location>
        <begin position="281"/>
        <end position="320"/>
    </location>
</feature>
<feature type="domain" description="EGF-like 2; calcium-binding" evidence="3">
    <location>
        <begin position="321"/>
        <end position="358"/>
    </location>
</feature>
<feature type="domain" description="EGF-like 3; calcium-binding" evidence="3">
    <location>
        <begin position="374"/>
        <end position="415"/>
    </location>
</feature>
<feature type="domain" description="EGF-like 4" evidence="3">
    <location>
        <begin position="418"/>
        <end position="459"/>
    </location>
</feature>
<feature type="repeat" description="TSP type-3 1">
    <location>
        <begin position="460"/>
        <end position="492"/>
    </location>
</feature>
<feature type="repeat" description="TSP type-3 2">
    <location>
        <begin position="493"/>
        <end position="528"/>
    </location>
</feature>
<feature type="repeat" description="TSP type-3 3">
    <location>
        <begin position="529"/>
        <end position="551"/>
    </location>
</feature>
<feature type="repeat" description="TSP type-3 4">
    <location>
        <begin position="552"/>
        <end position="587"/>
    </location>
</feature>
<feature type="repeat" description="TSP type-3 5">
    <location>
        <begin position="588"/>
        <end position="610"/>
    </location>
</feature>
<feature type="repeat" description="TSP type-3 6">
    <location>
        <begin position="611"/>
        <end position="648"/>
    </location>
</feature>
<feature type="repeat" description="TSP type-3 7">
    <location>
        <begin position="649"/>
        <end position="688"/>
    </location>
</feature>
<feature type="repeat" description="TSP type-3 8">
    <location>
        <begin position="689"/>
        <end position="724"/>
    </location>
</feature>
<feature type="domain" description="TSP C-terminal" evidence="4">
    <location>
        <begin position="728"/>
        <end position="942"/>
    </location>
</feature>
<feature type="region of interest" description="Disordered" evidence="5">
    <location>
        <begin position="610"/>
        <end position="678"/>
    </location>
</feature>
<feature type="compositionally biased region" description="Polar residues" evidence="5">
    <location>
        <begin position="637"/>
        <end position="649"/>
    </location>
</feature>
<feature type="compositionally biased region" description="Acidic residues" evidence="5">
    <location>
        <begin position="657"/>
        <end position="668"/>
    </location>
</feature>
<feature type="glycosylation site" description="N-linked (GlcNAc...) asparagine" evidence="2">
    <location>
        <position position="609"/>
    </location>
</feature>
<feature type="glycosylation site" description="N-linked (GlcNAc...) asparagine" evidence="2">
    <location>
        <position position="938"/>
    </location>
</feature>
<feature type="disulfide bond" description="Interchain" evidence="6">
    <location>
        <position position="256"/>
    </location>
</feature>
<feature type="disulfide bond" description="Interchain" evidence="6">
    <location>
        <position position="259"/>
    </location>
</feature>
<feature type="disulfide bond" evidence="3">
    <location>
        <begin position="285"/>
        <end position="296"/>
    </location>
</feature>
<feature type="disulfide bond" evidence="3">
    <location>
        <begin position="290"/>
        <end position="305"/>
    </location>
</feature>
<feature type="disulfide bond" evidence="3">
    <location>
        <begin position="308"/>
        <end position="319"/>
    </location>
</feature>
<feature type="disulfide bond" evidence="3">
    <location>
        <begin position="325"/>
        <end position="336"/>
    </location>
</feature>
<feature type="disulfide bond" evidence="3">
    <location>
        <begin position="330"/>
        <end position="345"/>
    </location>
</feature>
<feature type="disulfide bond" evidence="3">
    <location>
        <begin position="348"/>
        <end position="372"/>
    </location>
</feature>
<feature type="disulfide bond" evidence="3">
    <location>
        <begin position="378"/>
        <end position="392"/>
    </location>
</feature>
<feature type="disulfide bond" evidence="3">
    <location>
        <begin position="386"/>
        <end position="401"/>
    </location>
</feature>
<feature type="disulfide bond" evidence="3">
    <location>
        <begin position="404"/>
        <end position="416"/>
    </location>
</feature>
<feature type="disulfide bond" evidence="3">
    <location>
        <begin position="422"/>
        <end position="435"/>
    </location>
</feature>
<feature type="disulfide bond" evidence="3">
    <location>
        <begin position="429"/>
        <end position="445"/>
    </location>
</feature>
<feature type="disulfide bond" evidence="3">
    <location>
        <begin position="447"/>
        <end position="458"/>
    </location>
</feature>
<feature type="disulfide bond" evidence="3">
    <location>
        <begin position="474"/>
        <end position="479"/>
    </location>
</feature>
<feature type="disulfide bond" evidence="3">
    <location>
        <begin position="484"/>
        <end position="504"/>
    </location>
</feature>
<feature type="disulfide bond" evidence="3">
    <location>
        <begin position="520"/>
        <end position="540"/>
    </location>
</feature>
<feature type="disulfide bond" evidence="3">
    <location>
        <begin position="543"/>
        <end position="563"/>
    </location>
</feature>
<feature type="disulfide bond" evidence="3">
    <location>
        <begin position="579"/>
        <end position="599"/>
    </location>
</feature>
<feature type="disulfide bond" evidence="3">
    <location>
        <begin position="602"/>
        <end position="622"/>
    </location>
</feature>
<feature type="disulfide bond" evidence="3">
    <location>
        <begin position="640"/>
        <end position="660"/>
    </location>
</feature>
<feature type="disulfide bond" evidence="3">
    <location>
        <begin position="680"/>
        <end position="700"/>
    </location>
</feature>
<feature type="disulfide bond" evidence="3">
    <location>
        <begin position="716"/>
        <end position="937"/>
    </location>
</feature>
<dbReference type="EMBL" id="Z19091">
    <property type="protein sequence ID" value="CAA79518.1"/>
    <property type="molecule type" value="mRNA"/>
</dbReference>
<dbReference type="PIR" id="A45441">
    <property type="entry name" value="A45441"/>
</dbReference>
<dbReference type="RefSeq" id="NP_001081597.1">
    <property type="nucleotide sequence ID" value="NM_001088128.1"/>
</dbReference>
<dbReference type="SMR" id="Q06441"/>
<dbReference type="GlyCosmos" id="Q06441">
    <property type="glycosylation" value="2 sites, No reported glycans"/>
</dbReference>
<dbReference type="GeneID" id="397943"/>
<dbReference type="KEGG" id="xla:397943"/>
<dbReference type="AGR" id="Xenbase:XB-GENE-17336850"/>
<dbReference type="CTD" id="397943"/>
<dbReference type="Xenbase" id="XB-GENE-17336850">
    <property type="gene designation" value="thbs4.L"/>
</dbReference>
<dbReference type="OrthoDB" id="14563at2759"/>
<dbReference type="Proteomes" id="UP000186698">
    <property type="component" value="Chromosome 1L"/>
</dbReference>
<dbReference type="Bgee" id="397943">
    <property type="expression patterns" value="Expressed in camera-type eye and 11 other cell types or tissues"/>
</dbReference>
<dbReference type="GO" id="GO:0062023">
    <property type="term" value="C:collagen-containing extracellular matrix"/>
    <property type="evidence" value="ECO:0000250"/>
    <property type="project" value="UniProtKB"/>
</dbReference>
<dbReference type="GO" id="GO:0005783">
    <property type="term" value="C:endoplasmic reticulum"/>
    <property type="evidence" value="ECO:0000250"/>
    <property type="project" value="UniProtKB"/>
</dbReference>
<dbReference type="GO" id="GO:0005615">
    <property type="term" value="C:extracellular space"/>
    <property type="evidence" value="ECO:0000250"/>
    <property type="project" value="UniProtKB"/>
</dbReference>
<dbReference type="GO" id="GO:0016529">
    <property type="term" value="C:sarcoplasmic reticulum"/>
    <property type="evidence" value="ECO:0000250"/>
    <property type="project" value="UniProtKB"/>
</dbReference>
<dbReference type="GO" id="GO:0005509">
    <property type="term" value="F:calcium ion binding"/>
    <property type="evidence" value="ECO:0007669"/>
    <property type="project" value="InterPro"/>
</dbReference>
<dbReference type="GO" id="GO:0008083">
    <property type="term" value="F:growth factor activity"/>
    <property type="evidence" value="ECO:0007669"/>
    <property type="project" value="UniProtKB-KW"/>
</dbReference>
<dbReference type="GO" id="GO:0007155">
    <property type="term" value="P:cell adhesion"/>
    <property type="evidence" value="ECO:0007669"/>
    <property type="project" value="UniProtKB-KW"/>
</dbReference>
<dbReference type="GO" id="GO:0051781">
    <property type="term" value="P:positive regulation of cell division"/>
    <property type="evidence" value="ECO:0007669"/>
    <property type="project" value="UniProtKB-KW"/>
</dbReference>
<dbReference type="GO" id="GO:0034976">
    <property type="term" value="P:response to endoplasmic reticulum stress"/>
    <property type="evidence" value="ECO:0000318"/>
    <property type="project" value="GO_Central"/>
</dbReference>
<dbReference type="GO" id="GO:0006986">
    <property type="term" value="P:response to unfolded protein"/>
    <property type="evidence" value="ECO:0007669"/>
    <property type="project" value="UniProtKB-KW"/>
</dbReference>
<dbReference type="CDD" id="cd00054">
    <property type="entry name" value="EGF_CA"/>
    <property type="match status" value="3"/>
</dbReference>
<dbReference type="CDD" id="cd16080">
    <property type="entry name" value="TSP-4cc"/>
    <property type="match status" value="1"/>
</dbReference>
<dbReference type="FunFam" id="4.10.1080.10:FF:000004">
    <property type="entry name" value="Cartilage oligomeric matrix protein"/>
    <property type="match status" value="1"/>
</dbReference>
<dbReference type="FunFam" id="2.10.25.10:FF:000025">
    <property type="entry name" value="Thrombospondin 3"/>
    <property type="match status" value="1"/>
</dbReference>
<dbReference type="FunFam" id="2.10.25.10:FF:000027">
    <property type="entry name" value="Thrombospondin 3"/>
    <property type="match status" value="1"/>
</dbReference>
<dbReference type="FunFam" id="2.60.120.200:FF:000002">
    <property type="entry name" value="Thrombospondin 3"/>
    <property type="match status" value="1"/>
</dbReference>
<dbReference type="FunFam" id="4.10.1080.10:FF:000001">
    <property type="entry name" value="Thrombospondin 3"/>
    <property type="match status" value="1"/>
</dbReference>
<dbReference type="FunFam" id="2.60.120.200:FF:000123">
    <property type="entry name" value="Thrombospondin 4"/>
    <property type="match status" value="1"/>
</dbReference>
<dbReference type="FunFam" id="2.10.25.10:FF:000170">
    <property type="entry name" value="thrombospondin-3 isoform X1"/>
    <property type="match status" value="1"/>
</dbReference>
<dbReference type="FunFam" id="2.10.25.10:FF:000232">
    <property type="entry name" value="thrombospondin-3 isoform X1"/>
    <property type="match status" value="1"/>
</dbReference>
<dbReference type="FunFam" id="1.20.5.10:FF:000001">
    <property type="entry name" value="thrombospondin-3 isoform X2"/>
    <property type="match status" value="1"/>
</dbReference>
<dbReference type="Gene3D" id="1.20.5.10">
    <property type="match status" value="1"/>
</dbReference>
<dbReference type="Gene3D" id="2.60.120.200">
    <property type="match status" value="2"/>
</dbReference>
<dbReference type="Gene3D" id="2.10.25.10">
    <property type="entry name" value="Laminin"/>
    <property type="match status" value="4"/>
</dbReference>
<dbReference type="Gene3D" id="4.10.1080.10">
    <property type="entry name" value="TSP type-3 repeat"/>
    <property type="match status" value="2"/>
</dbReference>
<dbReference type="InterPro" id="IPR013320">
    <property type="entry name" value="ConA-like_dom_sf"/>
</dbReference>
<dbReference type="InterPro" id="IPR001881">
    <property type="entry name" value="EGF-like_Ca-bd_dom"/>
</dbReference>
<dbReference type="InterPro" id="IPR000742">
    <property type="entry name" value="EGF-like_dom"/>
</dbReference>
<dbReference type="InterPro" id="IPR018097">
    <property type="entry name" value="EGF_Ca-bd_CS"/>
</dbReference>
<dbReference type="InterPro" id="IPR009030">
    <property type="entry name" value="Growth_fac_rcpt_cys_sf"/>
</dbReference>
<dbReference type="InterPro" id="IPR049883">
    <property type="entry name" value="NOTCH1_EGF-like"/>
</dbReference>
<dbReference type="InterPro" id="IPR003367">
    <property type="entry name" value="Thrombospondin_3-like_rpt"/>
</dbReference>
<dbReference type="InterPro" id="IPR017897">
    <property type="entry name" value="Thrombospondin_3_rpt"/>
</dbReference>
<dbReference type="InterPro" id="IPR008859">
    <property type="entry name" value="Thrombospondin_C"/>
</dbReference>
<dbReference type="InterPro" id="IPR024665">
    <property type="entry name" value="TSP/COMP_coiled-coil"/>
</dbReference>
<dbReference type="InterPro" id="IPR046970">
    <property type="entry name" value="TSP/COMP_coiled-coil_sf"/>
</dbReference>
<dbReference type="InterPro" id="IPR028974">
    <property type="entry name" value="TSP_type-3_rpt"/>
</dbReference>
<dbReference type="InterPro" id="IPR048287">
    <property type="entry name" value="TSPN-like_N"/>
</dbReference>
<dbReference type="PANTHER" id="PTHR10199">
    <property type="entry name" value="THROMBOSPONDIN"/>
    <property type="match status" value="1"/>
</dbReference>
<dbReference type="PANTHER" id="PTHR10199:SF92">
    <property type="entry name" value="THROMBOSPONDIN-4"/>
    <property type="match status" value="1"/>
</dbReference>
<dbReference type="Pfam" id="PF11598">
    <property type="entry name" value="COMP"/>
    <property type="match status" value="1"/>
</dbReference>
<dbReference type="Pfam" id="PF07645">
    <property type="entry name" value="EGF_CA"/>
    <property type="match status" value="2"/>
</dbReference>
<dbReference type="Pfam" id="PF02412">
    <property type="entry name" value="TSP_3"/>
    <property type="match status" value="5"/>
</dbReference>
<dbReference type="Pfam" id="PF05735">
    <property type="entry name" value="TSP_C"/>
    <property type="match status" value="1"/>
</dbReference>
<dbReference type="SMART" id="SM00181">
    <property type="entry name" value="EGF"/>
    <property type="match status" value="4"/>
</dbReference>
<dbReference type="SMART" id="SM00179">
    <property type="entry name" value="EGF_CA"/>
    <property type="match status" value="3"/>
</dbReference>
<dbReference type="SMART" id="SM00210">
    <property type="entry name" value="TSPN"/>
    <property type="match status" value="1"/>
</dbReference>
<dbReference type="SUPFAM" id="SSF58006">
    <property type="entry name" value="Assembly domain of cartilage oligomeric matrix protein"/>
    <property type="match status" value="1"/>
</dbReference>
<dbReference type="SUPFAM" id="SSF49899">
    <property type="entry name" value="Concanavalin A-like lectins/glucanases"/>
    <property type="match status" value="2"/>
</dbReference>
<dbReference type="SUPFAM" id="SSF57196">
    <property type="entry name" value="EGF/Laminin"/>
    <property type="match status" value="1"/>
</dbReference>
<dbReference type="SUPFAM" id="SSF57184">
    <property type="entry name" value="Growth factor receptor domain"/>
    <property type="match status" value="1"/>
</dbReference>
<dbReference type="SUPFAM" id="SSF103647">
    <property type="entry name" value="TSP type-3 repeat"/>
    <property type="match status" value="3"/>
</dbReference>
<dbReference type="PROSITE" id="PS01186">
    <property type="entry name" value="EGF_2"/>
    <property type="match status" value="1"/>
</dbReference>
<dbReference type="PROSITE" id="PS50026">
    <property type="entry name" value="EGF_3"/>
    <property type="match status" value="3"/>
</dbReference>
<dbReference type="PROSITE" id="PS01187">
    <property type="entry name" value="EGF_CA"/>
    <property type="match status" value="2"/>
</dbReference>
<dbReference type="PROSITE" id="PS51234">
    <property type="entry name" value="TSP3"/>
    <property type="match status" value="8"/>
</dbReference>
<dbReference type="PROSITE" id="PS51236">
    <property type="entry name" value="TSP_CTER"/>
    <property type="match status" value="1"/>
</dbReference>
<evidence type="ECO:0000250" key="1"/>
<evidence type="ECO:0000255" key="2"/>
<evidence type="ECO:0000255" key="3">
    <source>
        <dbReference type="PROSITE-ProRule" id="PRU00076"/>
    </source>
</evidence>
<evidence type="ECO:0000255" key="4">
    <source>
        <dbReference type="PROSITE-ProRule" id="PRU00635"/>
    </source>
</evidence>
<evidence type="ECO:0000256" key="5">
    <source>
        <dbReference type="SAM" id="MobiDB-lite"/>
    </source>
</evidence>
<evidence type="ECO:0000305" key="6"/>